<protein>
    <recommendedName>
        <fullName evidence="1">Bifunctional protein HldE</fullName>
    </recommendedName>
    <domain>
        <recommendedName>
            <fullName evidence="1">D-beta-D-heptose 7-phosphate kinase</fullName>
            <ecNumber evidence="1">2.7.1.167</ecNumber>
        </recommendedName>
        <alternativeName>
            <fullName evidence="1">D-beta-D-heptose 7-phosphotransferase</fullName>
        </alternativeName>
        <alternativeName>
            <fullName evidence="1">D-glycero-beta-D-manno-heptose-7-phosphate kinase</fullName>
        </alternativeName>
    </domain>
    <domain>
        <recommendedName>
            <fullName evidence="1">D-beta-D-heptose 1-phosphate adenylyltransferase</fullName>
            <ecNumber evidence="1">2.7.7.70</ecNumber>
        </recommendedName>
        <alternativeName>
            <fullName evidence="1">D-glycero-beta-D-manno-heptose 1-phosphate adenylyltransferase</fullName>
        </alternativeName>
    </domain>
</protein>
<proteinExistence type="inferred from homology"/>
<dbReference type="EC" id="2.7.1.167" evidence="1"/>
<dbReference type="EC" id="2.7.7.70" evidence="1"/>
<dbReference type="EMBL" id="L42023">
    <property type="protein sequence ID" value="AAC23172.1"/>
    <property type="molecule type" value="Genomic_DNA"/>
</dbReference>
<dbReference type="EMBL" id="U17642">
    <property type="protein sequence ID" value="AAC43516.1"/>
    <property type="status" value="ALT_FRAME"/>
    <property type="molecule type" value="Genomic_DNA"/>
</dbReference>
<dbReference type="PIR" id="C64127">
    <property type="entry name" value="C64127"/>
</dbReference>
<dbReference type="RefSeq" id="NP_439675.1">
    <property type="nucleotide sequence ID" value="NC_000907.1"/>
</dbReference>
<dbReference type="SMR" id="O05074"/>
<dbReference type="STRING" id="71421.HI_1526"/>
<dbReference type="DNASU" id="949890"/>
<dbReference type="EnsemblBacteria" id="AAC23172">
    <property type="protein sequence ID" value="AAC23172"/>
    <property type="gene ID" value="HI_1526"/>
</dbReference>
<dbReference type="KEGG" id="hin:HI_1526"/>
<dbReference type="PATRIC" id="fig|71421.8.peg.1597"/>
<dbReference type="eggNOG" id="COG0615">
    <property type="taxonomic scope" value="Bacteria"/>
</dbReference>
<dbReference type="eggNOG" id="COG2870">
    <property type="taxonomic scope" value="Bacteria"/>
</dbReference>
<dbReference type="HOGENOM" id="CLU_021150_2_1_6"/>
<dbReference type="OrthoDB" id="9802794at2"/>
<dbReference type="PhylomeDB" id="O05074"/>
<dbReference type="BioCyc" id="HINF71421:G1GJ1-1548-MONOMER"/>
<dbReference type="UniPathway" id="UPA00356">
    <property type="reaction ID" value="UER00437"/>
</dbReference>
<dbReference type="UniPathway" id="UPA00356">
    <property type="reaction ID" value="UER00439"/>
</dbReference>
<dbReference type="UniPathway" id="UPA00976"/>
<dbReference type="Proteomes" id="UP000000579">
    <property type="component" value="Chromosome"/>
</dbReference>
<dbReference type="GO" id="GO:0005829">
    <property type="term" value="C:cytosol"/>
    <property type="evidence" value="ECO:0000318"/>
    <property type="project" value="GO_Central"/>
</dbReference>
<dbReference type="GO" id="GO:0005524">
    <property type="term" value="F:ATP binding"/>
    <property type="evidence" value="ECO:0007669"/>
    <property type="project" value="UniProtKB-UniRule"/>
</dbReference>
<dbReference type="GO" id="GO:0033785">
    <property type="term" value="F:heptose 7-phosphate kinase activity"/>
    <property type="evidence" value="ECO:0000318"/>
    <property type="project" value="GO_Central"/>
</dbReference>
<dbReference type="GO" id="GO:0033786">
    <property type="term" value="F:heptose-1-phosphate adenylyltransferase activity"/>
    <property type="evidence" value="ECO:0000318"/>
    <property type="project" value="GO_Central"/>
</dbReference>
<dbReference type="GO" id="GO:0016773">
    <property type="term" value="F:phosphotransferase activity, alcohol group as acceptor"/>
    <property type="evidence" value="ECO:0007669"/>
    <property type="project" value="InterPro"/>
</dbReference>
<dbReference type="GO" id="GO:0097171">
    <property type="term" value="P:ADP-L-glycero-beta-D-manno-heptose biosynthetic process"/>
    <property type="evidence" value="ECO:0007669"/>
    <property type="project" value="UniProtKB-UniPathway"/>
</dbReference>
<dbReference type="CDD" id="cd01172">
    <property type="entry name" value="RfaE_like"/>
    <property type="match status" value="1"/>
</dbReference>
<dbReference type="FunFam" id="3.40.1190.20:FF:000002">
    <property type="entry name" value="Bifunctional protein HldE"/>
    <property type="match status" value="1"/>
</dbReference>
<dbReference type="FunFam" id="3.40.50.620:FF:000028">
    <property type="entry name" value="Bifunctional protein HldE"/>
    <property type="match status" value="1"/>
</dbReference>
<dbReference type="Gene3D" id="3.40.1190.20">
    <property type="match status" value="1"/>
</dbReference>
<dbReference type="Gene3D" id="3.40.50.620">
    <property type="entry name" value="HUPs"/>
    <property type="match status" value="1"/>
</dbReference>
<dbReference type="HAMAP" id="MF_01603">
    <property type="entry name" value="HldE"/>
    <property type="match status" value="1"/>
</dbReference>
<dbReference type="InterPro" id="IPR023030">
    <property type="entry name" value="Bifunc_HldE"/>
</dbReference>
<dbReference type="InterPro" id="IPR004821">
    <property type="entry name" value="Cyt_trans-like"/>
</dbReference>
<dbReference type="InterPro" id="IPR011611">
    <property type="entry name" value="PfkB_dom"/>
</dbReference>
<dbReference type="InterPro" id="IPR011913">
    <property type="entry name" value="RfaE_dom_I"/>
</dbReference>
<dbReference type="InterPro" id="IPR011914">
    <property type="entry name" value="RfaE_dom_II"/>
</dbReference>
<dbReference type="InterPro" id="IPR029056">
    <property type="entry name" value="Ribokinase-like"/>
</dbReference>
<dbReference type="InterPro" id="IPR014729">
    <property type="entry name" value="Rossmann-like_a/b/a_fold"/>
</dbReference>
<dbReference type="NCBIfam" id="TIGR00125">
    <property type="entry name" value="cyt_tran_rel"/>
    <property type="match status" value="1"/>
</dbReference>
<dbReference type="NCBIfam" id="NF008454">
    <property type="entry name" value="PRK11316.1"/>
    <property type="match status" value="1"/>
</dbReference>
<dbReference type="NCBIfam" id="TIGR02198">
    <property type="entry name" value="rfaE_dom_I"/>
    <property type="match status" value="1"/>
</dbReference>
<dbReference type="NCBIfam" id="TIGR02199">
    <property type="entry name" value="rfaE_dom_II"/>
    <property type="match status" value="1"/>
</dbReference>
<dbReference type="PANTHER" id="PTHR46969">
    <property type="entry name" value="BIFUNCTIONAL PROTEIN HLDE"/>
    <property type="match status" value="1"/>
</dbReference>
<dbReference type="PANTHER" id="PTHR46969:SF1">
    <property type="entry name" value="BIFUNCTIONAL PROTEIN HLDE"/>
    <property type="match status" value="1"/>
</dbReference>
<dbReference type="Pfam" id="PF01467">
    <property type="entry name" value="CTP_transf_like"/>
    <property type="match status" value="1"/>
</dbReference>
<dbReference type="Pfam" id="PF00294">
    <property type="entry name" value="PfkB"/>
    <property type="match status" value="1"/>
</dbReference>
<dbReference type="SUPFAM" id="SSF52374">
    <property type="entry name" value="Nucleotidylyl transferase"/>
    <property type="match status" value="1"/>
</dbReference>
<dbReference type="SUPFAM" id="SSF53613">
    <property type="entry name" value="Ribokinase-like"/>
    <property type="match status" value="1"/>
</dbReference>
<keyword id="KW-0067">ATP-binding</keyword>
<keyword id="KW-0119">Carbohydrate metabolism</keyword>
<keyword id="KW-0418">Kinase</keyword>
<keyword id="KW-0511">Multifunctional enzyme</keyword>
<keyword id="KW-0547">Nucleotide-binding</keyword>
<keyword id="KW-0548">Nucleotidyltransferase</keyword>
<keyword id="KW-1185">Reference proteome</keyword>
<keyword id="KW-0808">Transferase</keyword>
<accession>O05074</accession>
<accession>Q48046</accession>
<gene>
    <name evidence="1" type="primary">hldE</name>
    <name type="synonym">rfaE</name>
    <name type="synonym">waaE</name>
    <name type="ordered locus">HI_1526</name>
</gene>
<sequence length="476" mass="51946">MAQYSAEFKQAKVLVLGDVMLDRYWFGATNRISPEAPVPVVRVQENEERAGGAANVAMNIASLNVPVQLMGLIGQDETGSALSLLLEKQKIDCNFVALETHPTITKLRILSRHQQLLRLDFEEDFNNVDCKDLLAKLESAVKNYGALILSDYGKGTLKDVQKMIQIARKANVPVLIDPKGTDFERYRGATLLTPNMSEFEAVVGKCNTEEEIIEKGLKLISDIELTALLVTRSEKGMTLLRPNQEPYHLPTVAKEVFDVTGAGDTVISVLATALADGRSFEESCYLANVAAGIVVGKLGTSTVSTVELENAIHARPETGFGIMSEAELKDAVAQAKARGEKIVMTNGCFDILHPGHISYLENARKLGDRLIVAVNSDDSVKRLKGESRPINNLENRMAVLAGLASVDWLVPFTEDTPQRLIGEILPDLLVKGGDYKPEEIAGSKEVWANGGDVKVLNFENGCSTTNVIEKIKLLKD</sequence>
<evidence type="ECO:0000255" key="1">
    <source>
        <dbReference type="HAMAP-Rule" id="MF_01603"/>
    </source>
</evidence>
<evidence type="ECO:0000305" key="2"/>
<evidence type="ECO:0000305" key="3">
    <source>
    </source>
</evidence>
<feature type="chain" id="PRO_0000080112" description="Bifunctional protein HldE">
    <location>
        <begin position="1"/>
        <end position="476"/>
    </location>
</feature>
<feature type="region of interest" description="Ribokinase">
    <location>
        <begin position="1"/>
        <end position="318"/>
    </location>
</feature>
<feature type="region of interest" description="Cytidylyltransferase">
    <location>
        <begin position="344"/>
        <end position="476"/>
    </location>
</feature>
<feature type="active site" evidence="1">
    <location>
        <position position="264"/>
    </location>
</feature>
<feature type="binding site" evidence="1">
    <location>
        <begin position="195"/>
        <end position="198"/>
    </location>
    <ligand>
        <name>ATP</name>
        <dbReference type="ChEBI" id="CHEBI:30616"/>
    </ligand>
</feature>
<feature type="sequence conflict" description="In Ref. 2; AAC43516." evidence="2" ref="2">
    <original>A</original>
    <variation>R</variation>
    <location>
        <position position="36"/>
    </location>
</feature>
<feature type="sequence conflict" description="In Ref. 2; AAC43516." evidence="2" ref="2">
    <original>L</original>
    <variation>H</variation>
    <location>
        <position position="84"/>
    </location>
</feature>
<feature type="sequence conflict" description="In Ref. 2; AAC43516." evidence="2" ref="2">
    <original>A</original>
    <variation>G</variation>
    <location>
        <position position="170"/>
    </location>
</feature>
<feature type="sequence conflict" description="In Ref. 2; AAC43516." evidence="2" ref="2">
    <original>E</original>
    <variation>K</variation>
    <location>
        <position position="214"/>
    </location>
</feature>
<feature type="sequence conflict" description="In Ref. 2; AAC43516." evidence="2" ref="2">
    <original>A</original>
    <variation>T</variation>
    <location>
        <position position="273"/>
    </location>
</feature>
<feature type="sequence conflict" description="In Ref. 2; AAC43516." evidence="2" ref="2">
    <original>R</original>
    <variation>C</variation>
    <location>
        <position position="278"/>
    </location>
</feature>
<organism>
    <name type="scientific">Haemophilus influenzae (strain ATCC 51907 / DSM 11121 / KW20 / Rd)</name>
    <dbReference type="NCBI Taxonomy" id="71421"/>
    <lineage>
        <taxon>Bacteria</taxon>
        <taxon>Pseudomonadati</taxon>
        <taxon>Pseudomonadota</taxon>
        <taxon>Gammaproteobacteria</taxon>
        <taxon>Pasteurellales</taxon>
        <taxon>Pasteurellaceae</taxon>
        <taxon>Haemophilus</taxon>
    </lineage>
</organism>
<reference key="1">
    <citation type="journal article" date="1995" name="Science">
        <title>Whole-genome random sequencing and assembly of Haemophilus influenzae Rd.</title>
        <authorList>
            <person name="Fleischmann R.D."/>
            <person name="Adams M.D."/>
            <person name="White O."/>
            <person name="Clayton R.A."/>
            <person name="Kirkness E.F."/>
            <person name="Kerlavage A.R."/>
            <person name="Bult C.J."/>
            <person name="Tomb J.-F."/>
            <person name="Dougherty B.A."/>
            <person name="Merrick J.M."/>
            <person name="McKenney K."/>
            <person name="Sutton G.G."/>
            <person name="FitzHugh W."/>
            <person name="Fields C.A."/>
            <person name="Gocayne J.D."/>
            <person name="Scott J.D."/>
            <person name="Shirley R."/>
            <person name="Liu L.-I."/>
            <person name="Glodek A."/>
            <person name="Kelley J.M."/>
            <person name="Weidman J.F."/>
            <person name="Phillips C.A."/>
            <person name="Spriggs T."/>
            <person name="Hedblom E."/>
            <person name="Cotton M.D."/>
            <person name="Utterback T.R."/>
            <person name="Hanna M.C."/>
            <person name="Nguyen D.T."/>
            <person name="Saudek D.M."/>
            <person name="Brandon R.C."/>
            <person name="Fine L.D."/>
            <person name="Fritchman J.L."/>
            <person name="Fuhrmann J.L."/>
            <person name="Geoghagen N.S.M."/>
            <person name="Gnehm C.L."/>
            <person name="McDonald L.A."/>
            <person name="Small K.V."/>
            <person name="Fraser C.M."/>
            <person name="Smith H.O."/>
            <person name="Venter J.C."/>
        </authorList>
    </citation>
    <scope>NUCLEOTIDE SEQUENCE [LARGE SCALE GENOMIC DNA]</scope>
    <source>
        <strain>ATCC 51907 / DSM 11121 / KW20 / Rd</strain>
    </source>
</reference>
<reference key="2">
    <citation type="journal article" date="1995" name="Infect. Immun.">
        <title>Molecular cloning and characterization of the nontypeable Haemophilus influenzae 2019 rfaE gene required for lipopolysaccharide biosynthesis.</title>
        <authorList>
            <person name="Lee N.-G."/>
            <person name="Sunshine M.G."/>
            <person name="Apicella M.A."/>
        </authorList>
    </citation>
    <scope>NUCLEOTIDE SEQUENCE [GENOMIC DNA] OF 1-427</scope>
    <scope>ROLE IN LOS BIOSYNTHESIS</scope>
    <source>
        <strain>NTHi 2019</strain>
    </source>
</reference>
<name>HLDE_HAEIN</name>
<comment type="function">
    <text evidence="3">Catalyzes the phosphorylation of D-glycero-D-manno-heptose 7-phosphate at the C-1 position to selectively form D-glycero-beta-D-manno-heptose-1,7-bisphosphate.</text>
</comment>
<comment type="function">
    <text evidence="3">Catalyzes the ADP transfer from ATP to D-glycero-beta-D-manno-heptose 1-phosphate, yielding ADP-D-glycero-beta-D-manno-heptose.</text>
</comment>
<comment type="catalytic activity">
    <reaction evidence="1">
        <text>D-glycero-beta-D-manno-heptose 7-phosphate + ATP = D-glycero-beta-D-manno-heptose 1,7-bisphosphate + ADP + H(+)</text>
        <dbReference type="Rhea" id="RHEA:27473"/>
        <dbReference type="ChEBI" id="CHEBI:15378"/>
        <dbReference type="ChEBI" id="CHEBI:30616"/>
        <dbReference type="ChEBI" id="CHEBI:60204"/>
        <dbReference type="ChEBI" id="CHEBI:60208"/>
        <dbReference type="ChEBI" id="CHEBI:456216"/>
        <dbReference type="EC" id="2.7.1.167"/>
    </reaction>
</comment>
<comment type="catalytic activity">
    <reaction evidence="1">
        <text>D-glycero-beta-D-manno-heptose 1-phosphate + ATP + H(+) = ADP-D-glycero-beta-D-manno-heptose + diphosphate</text>
        <dbReference type="Rhea" id="RHEA:27465"/>
        <dbReference type="ChEBI" id="CHEBI:15378"/>
        <dbReference type="ChEBI" id="CHEBI:30616"/>
        <dbReference type="ChEBI" id="CHEBI:33019"/>
        <dbReference type="ChEBI" id="CHEBI:59967"/>
        <dbReference type="ChEBI" id="CHEBI:61593"/>
        <dbReference type="EC" id="2.7.7.70"/>
    </reaction>
</comment>
<comment type="pathway">
    <text evidence="1">Nucleotide-sugar biosynthesis; ADP-L-glycero-beta-D-manno-heptose biosynthesis; ADP-L-glycero-beta-D-manno-heptose from D-glycero-beta-D-manno-heptose 7-phosphate: step 1/4.</text>
</comment>
<comment type="pathway">
    <text evidence="1">Nucleotide-sugar biosynthesis; ADP-L-glycero-beta-D-manno-heptose biosynthesis; ADP-L-glycero-beta-D-manno-heptose from D-glycero-beta-D-manno-heptose 7-phosphate: step 3/4.</text>
</comment>
<comment type="pathway">
    <text>Bacterial outer membrane biogenesis; LOS core biosynthesis.</text>
</comment>
<comment type="subunit">
    <text evidence="1">Homodimer.</text>
</comment>
<comment type="similarity">
    <text evidence="1">In the N-terminal section; belongs to the carbohydrate kinase PfkB family.</text>
</comment>
<comment type="similarity">
    <text evidence="1">In the C-terminal section; belongs to the cytidylyltransferase family.</text>
</comment>
<comment type="sequence caution" evidence="2">
    <conflict type="frameshift">
        <sequence resource="EMBL-CDS" id="AAC43516"/>
    </conflict>
</comment>